<name>Y1399_HAEIN</name>
<accession>P44175</accession>
<sequence>MKMKSLFVAMITFFSAAPFAHWQPIGNAEYTWGPFHVYTIGLFSETGTYQENERPLMLSFKYEKPIEGKNFAITLIKEIETLKLNDGDTQSWLKEMQATFPDFSPNDILNYIALPDRGYFVLNDTVLEHDFDAKFNQAFIGIWLAPNSTFVKLQPQLLGKTKSNHEATEFYLKPEIESFDEQDSTPELPPNYLLDSQKKSQG</sequence>
<keyword id="KW-1185">Reference proteome</keyword>
<protein>
    <recommendedName>
        <fullName>Uncharacterized protein HI_1399</fullName>
    </recommendedName>
</protein>
<organism>
    <name type="scientific">Haemophilus influenzae (strain ATCC 51907 / DSM 11121 / KW20 / Rd)</name>
    <dbReference type="NCBI Taxonomy" id="71421"/>
    <lineage>
        <taxon>Bacteria</taxon>
        <taxon>Pseudomonadati</taxon>
        <taxon>Pseudomonadota</taxon>
        <taxon>Gammaproteobacteria</taxon>
        <taxon>Pasteurellales</taxon>
        <taxon>Pasteurellaceae</taxon>
        <taxon>Haemophilus</taxon>
    </lineage>
</organism>
<reference key="1">
    <citation type="journal article" date="1995" name="Science">
        <title>Whole-genome random sequencing and assembly of Haemophilus influenzae Rd.</title>
        <authorList>
            <person name="Fleischmann R.D."/>
            <person name="Adams M.D."/>
            <person name="White O."/>
            <person name="Clayton R.A."/>
            <person name="Kirkness E.F."/>
            <person name="Kerlavage A.R."/>
            <person name="Bult C.J."/>
            <person name="Tomb J.-F."/>
            <person name="Dougherty B.A."/>
            <person name="Merrick J.M."/>
            <person name="McKenney K."/>
            <person name="Sutton G.G."/>
            <person name="FitzHugh W."/>
            <person name="Fields C.A."/>
            <person name="Gocayne J.D."/>
            <person name="Scott J.D."/>
            <person name="Shirley R."/>
            <person name="Liu L.-I."/>
            <person name="Glodek A."/>
            <person name="Kelley J.M."/>
            <person name="Weidman J.F."/>
            <person name="Phillips C.A."/>
            <person name="Spriggs T."/>
            <person name="Hedblom E."/>
            <person name="Cotton M.D."/>
            <person name="Utterback T.R."/>
            <person name="Hanna M.C."/>
            <person name="Nguyen D.T."/>
            <person name="Saudek D.M."/>
            <person name="Brandon R.C."/>
            <person name="Fine L.D."/>
            <person name="Fritchman J.L."/>
            <person name="Fuhrmann J.L."/>
            <person name="Geoghagen N.S.M."/>
            <person name="Gnehm C.L."/>
            <person name="McDonald L.A."/>
            <person name="Small K.V."/>
            <person name="Fraser C.M."/>
            <person name="Smith H.O."/>
            <person name="Venter J.C."/>
        </authorList>
    </citation>
    <scope>NUCLEOTIDE SEQUENCE [LARGE SCALE GENOMIC DNA]</scope>
    <source>
        <strain>ATCC 51907 / DSM 11121 / KW20 / Rd</strain>
    </source>
</reference>
<gene>
    <name type="ordered locus">HI_1399</name>
</gene>
<feature type="chain" id="PRO_0000078039" description="Uncharacterized protein HI_1399">
    <location>
        <begin position="1"/>
        <end position="202"/>
    </location>
</feature>
<feature type="region of interest" description="Disordered" evidence="1">
    <location>
        <begin position="179"/>
        <end position="202"/>
    </location>
</feature>
<dbReference type="EMBL" id="L42023">
    <property type="protein sequence ID" value="AAC23051.1"/>
    <property type="molecule type" value="Genomic_DNA"/>
</dbReference>
<dbReference type="PIR" id="E64027">
    <property type="entry name" value="E64027"/>
</dbReference>
<dbReference type="RefSeq" id="NP_439552.1">
    <property type="nucleotide sequence ID" value="NC_000907.1"/>
</dbReference>
<dbReference type="SMR" id="P44175"/>
<dbReference type="STRING" id="71421.HI_1399"/>
<dbReference type="EnsemblBacteria" id="AAC23051">
    <property type="protein sequence ID" value="AAC23051"/>
    <property type="gene ID" value="HI_1399"/>
</dbReference>
<dbReference type="KEGG" id="hin:HI_1399"/>
<dbReference type="PATRIC" id="fig|71421.8.peg.1459"/>
<dbReference type="eggNOG" id="COG2268">
    <property type="taxonomic scope" value="Bacteria"/>
</dbReference>
<dbReference type="HOGENOM" id="CLU_1353049_0_0_6"/>
<dbReference type="OrthoDB" id="8527419at2"/>
<dbReference type="PhylomeDB" id="P44175"/>
<dbReference type="BioCyc" id="HINF71421:G1GJ1-1426-MONOMER"/>
<dbReference type="Proteomes" id="UP000000579">
    <property type="component" value="Chromosome"/>
</dbReference>
<dbReference type="InterPro" id="IPR016087">
    <property type="entry name" value="Chalcone_isomerase"/>
</dbReference>
<dbReference type="Pfam" id="PF16036">
    <property type="entry name" value="Chalcone_3"/>
    <property type="match status" value="1"/>
</dbReference>
<proteinExistence type="predicted"/>
<evidence type="ECO:0000256" key="1">
    <source>
        <dbReference type="SAM" id="MobiDB-lite"/>
    </source>
</evidence>